<name>MDHC_TAESO</name>
<reference evidence="9" key="1">
    <citation type="journal article" date="2011" name="Exp. Parasitol.">
        <title>Cloning, sequencing and functional expression of cytosolic malate dehydrogenase from Taenia solium: Purification and characterization of the recombinant enzyme.</title>
        <authorList>
            <person name="Nava G."/>
            <person name="Laclette J.P."/>
            <person name="Bobes R."/>
            <person name="Carrero J.C."/>
            <person name="Reyes-Vivas H."/>
            <person name="Enriquez-Flores S."/>
            <person name="Mendoza-Hernandez G."/>
            <person name="Plancarte A."/>
        </authorList>
    </citation>
    <scope>NUCLEOTIDE SEQUENCE [GENOMIC DNA]</scope>
    <scope>CATALYTIC ACTIVITY</scope>
    <scope>BIOPHYSICOCHEMICAL PROPERTIES</scope>
    <scope>SUBSTRATE SPECIFICITY</scope>
    <scope>CIRCULAR DICHROISM ANALYSIS</scope>
</reference>
<reference key="2">
    <citation type="journal article" date="2009" name="Parasitol. Res.">
        <title>Purification, properties, and kinetic studies of cytoplasmic malate dehydrogenase from Taenia solium cysticerci.</title>
        <authorList>
            <person name="Plancarte A."/>
            <person name="Nava G."/>
            <person name="Mendoza-Hernandez G."/>
        </authorList>
    </citation>
    <scope>PROTEIN SEQUENCE OF 2-21</scope>
    <scope>CATALYTIC ACTIVITY</scope>
    <scope>ACTIVITY REGULATION</scope>
    <scope>BIOPHYSICOCHEMICAL PROPERTIES</scope>
    <scope>SUBUNIT</scope>
    <scope>SUBCELLULAR LOCATION</scope>
    <scope>IDENTIFICATION BY MASS SPECTROMETRY</scope>
    <scope>REACTION MECHANISM</scope>
</reference>
<gene>
    <name evidence="7 9" type="primary">MDH</name>
</gene>
<proteinExistence type="evidence at protein level"/>
<evidence type="ECO:0000250" key="1">
    <source>
        <dbReference type="UniProtKB" id="P11708"/>
    </source>
</evidence>
<evidence type="ECO:0000255" key="2">
    <source>
        <dbReference type="PIRSR" id="PIRSR000102-1"/>
    </source>
</evidence>
<evidence type="ECO:0000255" key="3">
    <source>
        <dbReference type="RuleBase" id="RU003369"/>
    </source>
</evidence>
<evidence type="ECO:0000269" key="4">
    <source>
    </source>
</evidence>
<evidence type="ECO:0000269" key="5">
    <source>
    </source>
</evidence>
<evidence type="ECO:0000303" key="6">
    <source>
    </source>
</evidence>
<evidence type="ECO:0000303" key="7">
    <source>
    </source>
</evidence>
<evidence type="ECO:0000305" key="8"/>
<evidence type="ECO:0000312" key="9">
    <source>
        <dbReference type="EMBL" id="ADX42057.1"/>
    </source>
</evidence>
<accession>F1C7I4</accession>
<feature type="initiator methionine" description="Removed" evidence="4">
    <location>
        <position position="1"/>
    </location>
</feature>
<feature type="chain" id="PRO_0000438645" description="Malate dehydrogenase, cytoplasmic">
    <location>
        <begin position="2"/>
        <end position="332"/>
    </location>
</feature>
<feature type="active site" description="Proton acceptor" evidence="2">
    <location>
        <position position="187"/>
    </location>
</feature>
<feature type="binding site" evidence="1">
    <location>
        <begin position="11"/>
        <end position="17"/>
    </location>
    <ligand>
        <name>NAD(+)</name>
        <dbReference type="ChEBI" id="CHEBI:57540"/>
    </ligand>
</feature>
<feature type="binding site" evidence="1">
    <location>
        <position position="42"/>
    </location>
    <ligand>
        <name>NAD(+)</name>
        <dbReference type="ChEBI" id="CHEBI:57540"/>
    </ligand>
</feature>
<feature type="binding site" evidence="1">
    <location>
        <position position="92"/>
    </location>
    <ligand>
        <name>substrate</name>
    </ligand>
</feature>
<feature type="binding site" evidence="1">
    <location>
        <position position="98"/>
    </location>
    <ligand>
        <name>substrate</name>
    </ligand>
</feature>
<feature type="binding site" evidence="1">
    <location>
        <position position="105"/>
    </location>
    <ligand>
        <name>NAD(+)</name>
        <dbReference type="ChEBI" id="CHEBI:57540"/>
    </ligand>
</feature>
<feature type="binding site" evidence="1">
    <location>
        <position position="112"/>
    </location>
    <ligand>
        <name>NAD(+)</name>
        <dbReference type="ChEBI" id="CHEBI:57540"/>
    </ligand>
</feature>
<feature type="binding site" evidence="1">
    <location>
        <begin position="129"/>
        <end position="131"/>
    </location>
    <ligand>
        <name>NAD(+)</name>
        <dbReference type="ChEBI" id="CHEBI:57540"/>
    </ligand>
</feature>
<feature type="binding site" evidence="1">
    <location>
        <position position="131"/>
    </location>
    <ligand>
        <name>substrate</name>
    </ligand>
</feature>
<feature type="binding site" evidence="1">
    <location>
        <position position="162"/>
    </location>
    <ligand>
        <name>substrate</name>
    </ligand>
</feature>
<sequence>MPGPLRVLITGAAGQIAYNLSNMVANGNLFGKDQKIILHLLDIPEAKTVLEGVVMELQDCAFTVLEGIVPTHCLKEAFTDIDVALMVGAMPRKQGMERRDLLSSNVKIFKDQGEALEKYAKKTVKVLVVGNPANTNCLIMSKYAPSIPKENFTALSRLDHNRAIYQVAAKVGVPSECVKNVCIWGNHSNKQFPDLAHAVVTKGGKQHPAKELINDEKWVKEVFTPCVQNRGAAVIGLRKLSSAASAAKAIVDQMHDWWFGTKEGEWVSMSVYSTGEHYGAPKDIYFSFPVTIKNGHYKVVDGLAMDEWGKGLFKITADELVDEREVALSSFK</sequence>
<protein>
    <recommendedName>
        <fullName evidence="6">Malate dehydrogenase, cytoplasmic</fullName>
        <ecNumber evidence="4 5">1.1.1.37</ecNumber>
    </recommendedName>
    <alternativeName>
        <fullName evidence="7 9">Cytosolic malate dehydrogenase</fullName>
    </alternativeName>
</protein>
<comment type="function">
    <text evidence="5">Malate dehydrogenase. Has no activity with NADPH as substrate. Does not show lactate dehydrogenase activity.</text>
</comment>
<comment type="catalytic activity">
    <reaction evidence="4 5">
        <text>(S)-malate + NAD(+) = oxaloacetate + NADH + H(+)</text>
        <dbReference type="Rhea" id="RHEA:21432"/>
        <dbReference type="ChEBI" id="CHEBI:15378"/>
        <dbReference type="ChEBI" id="CHEBI:15589"/>
        <dbReference type="ChEBI" id="CHEBI:16452"/>
        <dbReference type="ChEBI" id="CHEBI:57540"/>
        <dbReference type="ChEBI" id="CHEBI:57945"/>
        <dbReference type="EC" id="1.1.1.37"/>
    </reaction>
</comment>
<comment type="activity regulation">
    <text evidence="4">By arsenate for both the forward and reverse reactions.</text>
</comment>
<comment type="biophysicochemical properties">
    <kinetics>
        <KM evidence="5">100 uM for L-malate (at pH 9.6)</KM>
        <KM evidence="5">42 uM for NAD (at pH 9.6)</KM>
        <KM evidence="5">44 uM for oxaloacetate (at pH 8)</KM>
        <KM evidence="5">167 uM for NADH (at pH 8)</KM>
        <KM evidence="4">215 uM for L-malate (at pH 9.6)</KM>
        <KM evidence="4">50 uM for NAD (at pH 9.6)</KM>
        <KM evidence="4">2.4 uM for oxaloacetate (at pH 7.6)</KM>
        <KM evidence="4">48 uM for NADH (at pH 7.6)</KM>
        <Vmax evidence="5">77.03 umol/min/mg enzyme toward L-malate (at pH 9.6)</Vmax>
        <Vmax evidence="5">79.12 umol/min/mg enzyme toward NAD (at pH 9.6)</Vmax>
        <Vmax evidence="5">450.3 umol/min/mg enzyme toward oxaloacetate (at pH 8)</Vmax>
        <Vmax evidence="5">721.4 umol/min/mg enzyme toward NADH (at pH 8)</Vmax>
        <Vmax evidence="4">87.8 umol/min/mg enzyme toward L-malate (at pH 9.6)</Vmax>
        <Vmax evidence="4">104.0 umol/min/mg enzyme toward NAD (at pH 9.6)</Vmax>
        <Vmax evidence="4">1490.0 umol/min/mg enzyme toward oxaloacetate (at pH 7.6)</Vmax>
        <Vmax evidence="4">1714.0 umol/min/mg enzyme toward NADH (at pH 7.6)</Vmax>
        <text evidence="5">kcat is 47.4 sec(-1) for L-malate. kcat is 385.6 sec(-1) for NAD. kcat is 665.34 sec(-1) for oxaloacetate. kcat is 962.66 sec(-1) for NADH.</text>
    </kinetics>
    <phDependence>
        <text evidence="4 5">Optimum pH is 7.6 for oxaloacetate reduction and 9.6 for malate oxidation (PubMed:19277715, PubMed:21439955). Stable between pH 6.8-8.5 for the forward reaction (PubMed:19277715).</text>
    </phDependence>
    <temperatureDependence>
        <text evidence="5">Has highest activity between 5-40 degrees Celsius. No activity at 60 degrees Celsius.</text>
    </temperatureDependence>
</comment>
<comment type="subunit">
    <text evidence="4">Homodimer.</text>
</comment>
<comment type="subcellular location">
    <subcellularLocation>
        <location evidence="4">Cytoplasm</location>
    </subcellularLocation>
</comment>
<comment type="similarity">
    <text evidence="3 8">Belongs to the LDH/MDH superfamily. MDH type 2 family.</text>
</comment>
<organism>
    <name type="scientific">Taenia solium</name>
    <name type="common">Pork tapeworm</name>
    <dbReference type="NCBI Taxonomy" id="6204"/>
    <lineage>
        <taxon>Eukaryota</taxon>
        <taxon>Metazoa</taxon>
        <taxon>Spiralia</taxon>
        <taxon>Lophotrochozoa</taxon>
        <taxon>Platyhelminthes</taxon>
        <taxon>Cestoda</taxon>
        <taxon>Eucestoda</taxon>
        <taxon>Cyclophyllidea</taxon>
        <taxon>Taeniidae</taxon>
        <taxon>Taenia</taxon>
    </lineage>
</organism>
<keyword id="KW-0963">Cytoplasm</keyword>
<keyword id="KW-0903">Direct protein sequencing</keyword>
<keyword id="KW-0520">NAD</keyword>
<keyword id="KW-0560">Oxidoreductase</keyword>
<keyword id="KW-0816">Tricarboxylic acid cycle</keyword>
<dbReference type="EC" id="1.1.1.37" evidence="4 5"/>
<dbReference type="EMBL" id="HQ207526">
    <property type="protein sequence ID" value="ADX42057.1"/>
    <property type="molecule type" value="Genomic_DNA"/>
</dbReference>
<dbReference type="SMR" id="F1C7I4"/>
<dbReference type="BRENDA" id="1.1.1.37">
    <property type="organism ID" value="7956"/>
</dbReference>
<dbReference type="GO" id="GO:0005737">
    <property type="term" value="C:cytoplasm"/>
    <property type="evidence" value="ECO:0000314"/>
    <property type="project" value="UniProtKB"/>
</dbReference>
<dbReference type="GO" id="GO:0030060">
    <property type="term" value="F:L-malate dehydrogenase (NAD+) activity"/>
    <property type="evidence" value="ECO:0000314"/>
    <property type="project" value="UniProtKB"/>
</dbReference>
<dbReference type="GO" id="GO:0051287">
    <property type="term" value="F:NAD binding"/>
    <property type="evidence" value="ECO:0000250"/>
    <property type="project" value="UniProtKB"/>
</dbReference>
<dbReference type="GO" id="GO:0042803">
    <property type="term" value="F:protein homodimerization activity"/>
    <property type="evidence" value="ECO:0000314"/>
    <property type="project" value="UniProtKB"/>
</dbReference>
<dbReference type="GO" id="GO:0006108">
    <property type="term" value="P:malate metabolic process"/>
    <property type="evidence" value="ECO:0000314"/>
    <property type="project" value="UniProtKB"/>
</dbReference>
<dbReference type="GO" id="GO:0006099">
    <property type="term" value="P:tricarboxylic acid cycle"/>
    <property type="evidence" value="ECO:0007669"/>
    <property type="project" value="UniProtKB-KW"/>
</dbReference>
<dbReference type="CDD" id="cd01336">
    <property type="entry name" value="MDH_cytoplasmic_cytosolic"/>
    <property type="match status" value="1"/>
</dbReference>
<dbReference type="FunFam" id="3.40.50.720:FF:000010">
    <property type="entry name" value="Malate dehydrogenase"/>
    <property type="match status" value="1"/>
</dbReference>
<dbReference type="FunFam" id="3.90.110.10:FF:000014">
    <property type="entry name" value="Malate dehydrogenase"/>
    <property type="match status" value="1"/>
</dbReference>
<dbReference type="Gene3D" id="3.90.110.10">
    <property type="entry name" value="Lactate dehydrogenase/glycoside hydrolase, family 4, C-terminal"/>
    <property type="match status" value="1"/>
</dbReference>
<dbReference type="Gene3D" id="3.40.50.720">
    <property type="entry name" value="NAD(P)-binding Rossmann-like Domain"/>
    <property type="match status" value="1"/>
</dbReference>
<dbReference type="InterPro" id="IPR001557">
    <property type="entry name" value="L-lactate/malate_DH"/>
</dbReference>
<dbReference type="InterPro" id="IPR022383">
    <property type="entry name" value="Lactate/malate_DH_C"/>
</dbReference>
<dbReference type="InterPro" id="IPR001236">
    <property type="entry name" value="Lactate/malate_DH_N"/>
</dbReference>
<dbReference type="InterPro" id="IPR015955">
    <property type="entry name" value="Lactate_DH/Glyco_Ohase_4_C"/>
</dbReference>
<dbReference type="InterPro" id="IPR011274">
    <property type="entry name" value="Malate_DH_NAD-dep_euk"/>
</dbReference>
<dbReference type="InterPro" id="IPR010945">
    <property type="entry name" value="Malate_DH_type2"/>
</dbReference>
<dbReference type="InterPro" id="IPR036291">
    <property type="entry name" value="NAD(P)-bd_dom_sf"/>
</dbReference>
<dbReference type="NCBIfam" id="TIGR01759">
    <property type="entry name" value="MalateDH-SF1"/>
    <property type="match status" value="1"/>
</dbReference>
<dbReference type="NCBIfam" id="TIGR01758">
    <property type="entry name" value="MDH_euk_cyt"/>
    <property type="match status" value="1"/>
</dbReference>
<dbReference type="NCBIfam" id="NF003916">
    <property type="entry name" value="PRK05442.1"/>
    <property type="match status" value="1"/>
</dbReference>
<dbReference type="PANTHER" id="PTHR23382">
    <property type="entry name" value="MALATE DEHYDROGENASE"/>
    <property type="match status" value="1"/>
</dbReference>
<dbReference type="Pfam" id="PF02866">
    <property type="entry name" value="Ldh_1_C"/>
    <property type="match status" value="1"/>
</dbReference>
<dbReference type="Pfam" id="PF00056">
    <property type="entry name" value="Ldh_1_N"/>
    <property type="match status" value="1"/>
</dbReference>
<dbReference type="PIRSF" id="PIRSF000102">
    <property type="entry name" value="Lac_mal_DH"/>
    <property type="match status" value="1"/>
</dbReference>
<dbReference type="SUPFAM" id="SSF56327">
    <property type="entry name" value="LDH C-terminal domain-like"/>
    <property type="match status" value="1"/>
</dbReference>
<dbReference type="SUPFAM" id="SSF51735">
    <property type="entry name" value="NAD(P)-binding Rossmann-fold domains"/>
    <property type="match status" value="1"/>
</dbReference>